<keyword id="KW-0903">Direct protein sequencing</keyword>
<keyword id="KW-1015">Disulfide bond</keyword>
<keyword id="KW-0325">Glycoprotein</keyword>
<keyword id="KW-0372">Hormone</keyword>
<keyword id="KW-0964">Secreted</keyword>
<organism>
    <name type="scientific">Balaenoptera acutorostrata</name>
    <name type="common">Common minke whale</name>
    <name type="synonym">Balaena rostrata</name>
    <dbReference type="NCBI Taxonomy" id="9767"/>
    <lineage>
        <taxon>Eukaryota</taxon>
        <taxon>Metazoa</taxon>
        <taxon>Chordata</taxon>
        <taxon>Craniata</taxon>
        <taxon>Vertebrata</taxon>
        <taxon>Euteleostomi</taxon>
        <taxon>Mammalia</taxon>
        <taxon>Eutheria</taxon>
        <taxon>Laurasiatheria</taxon>
        <taxon>Artiodactyla</taxon>
        <taxon>Whippomorpha</taxon>
        <taxon>Cetacea</taxon>
        <taxon>Mysticeti</taxon>
        <taxon>Balaenopteridae</taxon>
        <taxon>Balaenoptera</taxon>
    </lineage>
</organism>
<dbReference type="PIR" id="PN0138">
    <property type="entry name" value="PN0138"/>
</dbReference>
<dbReference type="GlyCosmos" id="P37036">
    <property type="glycosylation" value="2 sites, No reported glycans"/>
</dbReference>
<dbReference type="GO" id="GO:0005615">
    <property type="term" value="C:extracellular space"/>
    <property type="evidence" value="ECO:0000250"/>
    <property type="project" value="UniProtKB"/>
</dbReference>
<dbReference type="GO" id="GO:0016914">
    <property type="term" value="C:follicle-stimulating hormone complex"/>
    <property type="evidence" value="ECO:0000250"/>
    <property type="project" value="UniProtKB"/>
</dbReference>
<dbReference type="GO" id="GO:0016913">
    <property type="term" value="F:follicle-stimulating hormone activity"/>
    <property type="evidence" value="ECO:0000250"/>
    <property type="project" value="UniProtKB"/>
</dbReference>
<dbReference type="GO" id="GO:0007186">
    <property type="term" value="P:G protein-coupled receptor signaling pathway"/>
    <property type="evidence" value="ECO:0000250"/>
    <property type="project" value="UniProtKB"/>
</dbReference>
<dbReference type="GO" id="GO:0010893">
    <property type="term" value="P:positive regulation of steroid biosynthetic process"/>
    <property type="evidence" value="ECO:0000250"/>
    <property type="project" value="UniProtKB"/>
</dbReference>
<dbReference type="GO" id="GO:0010469">
    <property type="term" value="P:regulation of signaling receptor activity"/>
    <property type="evidence" value="ECO:0000250"/>
    <property type="project" value="UniProtKB"/>
</dbReference>
<dbReference type="GO" id="GO:0006590">
    <property type="term" value="P:thyroid hormone generation"/>
    <property type="evidence" value="ECO:0007669"/>
    <property type="project" value="TreeGrafter"/>
</dbReference>
<dbReference type="FunFam" id="2.10.90.10:FF:000011">
    <property type="entry name" value="Glycoprotein hormones alpha chain"/>
    <property type="match status" value="1"/>
</dbReference>
<dbReference type="Gene3D" id="2.10.90.10">
    <property type="entry name" value="Cystine-knot cytokines"/>
    <property type="match status" value="1"/>
</dbReference>
<dbReference type="InterPro" id="IPR029034">
    <property type="entry name" value="Cystine-knot_cytokine"/>
</dbReference>
<dbReference type="InterPro" id="IPR000476">
    <property type="entry name" value="Glyco_hormone"/>
</dbReference>
<dbReference type="PANTHER" id="PTHR11509">
    <property type="entry name" value="GLYCOPROTEIN HORMONE ALPHA CHAIN"/>
    <property type="match status" value="1"/>
</dbReference>
<dbReference type="PANTHER" id="PTHR11509:SF0">
    <property type="entry name" value="GLYCOPROTEIN HORMONES ALPHA CHAIN"/>
    <property type="match status" value="1"/>
</dbReference>
<dbReference type="Pfam" id="PF00236">
    <property type="entry name" value="Hormone_6"/>
    <property type="match status" value="1"/>
</dbReference>
<dbReference type="PRINTS" id="PR00274">
    <property type="entry name" value="GLYCOHORMONE"/>
</dbReference>
<dbReference type="SMART" id="SM00067">
    <property type="entry name" value="GHA"/>
    <property type="match status" value="1"/>
</dbReference>
<dbReference type="SUPFAM" id="SSF57501">
    <property type="entry name" value="Cystine-knot cytokines"/>
    <property type="match status" value="1"/>
</dbReference>
<dbReference type="PROSITE" id="PS00779">
    <property type="entry name" value="GLYCO_HORMONE_ALPHA_1"/>
    <property type="match status" value="1"/>
</dbReference>
<dbReference type="PROSITE" id="PS00780">
    <property type="entry name" value="GLYCO_HORMONE_ALPHA_2"/>
    <property type="match status" value="1"/>
</dbReference>
<dbReference type="PROSITE" id="PS50277">
    <property type="entry name" value="GLYCO_HORMONE_ALPHA_3"/>
    <property type="match status" value="1"/>
</dbReference>
<feature type="chain" id="PRO_0000149029" description="Glycoprotein hormones alpha chain">
    <location>
        <begin position="1"/>
        <end position="96"/>
    </location>
</feature>
<feature type="glycosylation site" description="N-linked (GlcNAc...) asparagine" evidence="1">
    <location>
        <position position="56"/>
    </location>
</feature>
<feature type="glycosylation site" description="N-linked (GlcNAc...) asparagine" evidence="1">
    <location>
        <position position="82"/>
    </location>
</feature>
<feature type="disulfide bond" evidence="1">
    <location>
        <begin position="11"/>
        <end position="35"/>
    </location>
</feature>
<feature type="disulfide bond" evidence="1">
    <location>
        <begin position="14"/>
        <end position="64"/>
    </location>
</feature>
<feature type="disulfide bond" evidence="1">
    <location>
        <begin position="32"/>
        <end position="86"/>
    </location>
</feature>
<feature type="disulfide bond" evidence="1">
    <location>
        <begin position="36"/>
        <end position="88"/>
    </location>
</feature>
<feature type="disulfide bond" evidence="1">
    <location>
        <begin position="63"/>
        <end position="91"/>
    </location>
</feature>
<sequence length="96" mass="10721">FPBGZFTMZGCPZCKLKZBKYFSKLGAPIYZCMGCCFSRAYPTPARSKKTMLVPKNITSZATCCVAKAFTKATVMGBARVZNHTZCHCSTCYYHKS</sequence>
<proteinExistence type="evidence at protein level"/>
<name>GLHA_BALAC</name>
<evidence type="ECO:0000250" key="1">
    <source>
        <dbReference type="UniProtKB" id="P01215"/>
    </source>
</evidence>
<evidence type="ECO:0000305" key="2"/>
<gene>
    <name type="primary">CGA</name>
</gene>
<comment type="function">
    <text evidence="1">Shared alpha chain of the active heterodimeric glycoprotein hormones thyrotropin/thyroid stimulating hormone/TSH, lutropin/luteinizing hormone/LH and follitropin/follicle stimulating hormone/FSH. These hormones bind specific receptors on target cells that in turn activate downstream signaling pathways.</text>
</comment>
<comment type="subunit">
    <text evidence="1">Heterodimer. The active hormones thyrotropin, lutropin and follitropin are heterodimers composed of CGA, a common alpha chain described here and a unique beta chain which confers their biological specificity to the hormones: TSHB for thyrotropin, LHB for lutropin and FSHB for follitropin.</text>
</comment>
<comment type="subcellular location">
    <subcellularLocation>
        <location evidence="1">Secreted</location>
    </subcellularLocation>
</comment>
<comment type="similarity">
    <text evidence="2">Belongs to the glycoprotein hormones subunit alpha family.</text>
</comment>
<accession>P37036</accession>
<reference key="1">
    <citation type="journal article" date="1985" name="Biokhimiia">
        <title>Amino acid sequence of reduced and carboxymethylated alpha- and beta-subunits of the little picked whale luteinizing hormone.</title>
        <authorList>
            <person name="Karasev V.S."/>
            <person name="Pankov Y.A."/>
        </authorList>
    </citation>
    <scope>PROTEIN SEQUENCE</scope>
</reference>
<protein>
    <recommendedName>
        <fullName>Glycoprotein hormones alpha chain</fullName>
    </recommendedName>
    <alternativeName>
        <fullName>Anterior pituitary glycoprotein hormones common subunit alpha</fullName>
    </alternativeName>
    <alternativeName>
        <fullName>Follicle-stimulating hormone alpha chain</fullName>
        <shortName>FSH-alpha</shortName>
    </alternativeName>
    <alternativeName>
        <fullName>Follitropin alpha chain</fullName>
    </alternativeName>
    <alternativeName>
        <fullName>Luteinizing hormone alpha chain</fullName>
        <shortName>LSH-alpha</shortName>
    </alternativeName>
    <alternativeName>
        <fullName>Lutropin alpha chain</fullName>
    </alternativeName>
    <alternativeName>
        <fullName>Thyroid-stimulating hormone alpha chain</fullName>
        <shortName>TSH-alpha</shortName>
    </alternativeName>
    <alternativeName>
        <fullName>Thyrotropin alpha chain</fullName>
    </alternativeName>
</protein>